<accession>Q8TXW1</accession>
<name>AMZA_METKA</name>
<comment type="function">
    <text evidence="1 2">Probable zinc metalloprotease whose natural substrate is unknown. Does not show endo- or exopeptidase activity against resorufin labeled casein, p-nitroanilide (pNA), amidomethylcoumarin (AMC) (one to three amino acids in length), and hippuryl-aminoacid substrates.</text>
</comment>
<comment type="cofactor">
    <cofactor evidence="1 2">
        <name>Zn(2+)</name>
        <dbReference type="ChEBI" id="CHEBI:29105"/>
    </cofactor>
    <text evidence="1 2">Binds 2 Zn(2+) ions per subunit. One is catalytic, whereas the other seems to have a structural role.</text>
</comment>
<comment type="subunit">
    <text evidence="1">Monomer.</text>
</comment>
<comment type="similarity">
    <text evidence="1">Belongs to the peptidase M54 family.</text>
</comment>
<keyword id="KW-0002">3D-structure</keyword>
<keyword id="KW-0378">Hydrolase</keyword>
<keyword id="KW-0479">Metal-binding</keyword>
<keyword id="KW-0482">Metalloprotease</keyword>
<keyword id="KW-0645">Protease</keyword>
<keyword id="KW-1185">Reference proteome</keyword>
<keyword id="KW-0862">Zinc</keyword>
<evidence type="ECO:0000255" key="1">
    <source>
        <dbReference type="HAMAP-Rule" id="MF_01842"/>
    </source>
</evidence>
<evidence type="ECO:0000269" key="2">
    <source>
    </source>
</evidence>
<evidence type="ECO:0000269" key="3">
    <source>
    </source>
</evidence>
<evidence type="ECO:0000305" key="4"/>
<evidence type="ECO:0007829" key="5">
    <source>
        <dbReference type="PDB" id="2X7M"/>
    </source>
</evidence>
<feature type="chain" id="PRO_0000159627" description="Archaemetzincin">
    <location>
        <begin position="1"/>
        <end position="175"/>
    </location>
</feature>
<feature type="active site" description="Proton acceptor" evidence="4">
    <location>
        <position position="126"/>
    </location>
</feature>
<feature type="binding site" evidence="1 2">
    <location>
        <position position="125"/>
    </location>
    <ligand>
        <name>Zn(2+)</name>
        <dbReference type="ChEBI" id="CHEBI:29105"/>
        <label>1</label>
        <note>catalytic</note>
    </ligand>
</feature>
<feature type="binding site" evidence="1 2">
    <location>
        <position position="129"/>
    </location>
    <ligand>
        <name>Zn(2+)</name>
        <dbReference type="ChEBI" id="CHEBI:29105"/>
        <label>1</label>
        <note>catalytic</note>
    </ligand>
</feature>
<feature type="binding site" evidence="1 2">
    <location>
        <position position="135"/>
    </location>
    <ligand>
        <name>Zn(2+)</name>
        <dbReference type="ChEBI" id="CHEBI:29105"/>
        <label>1</label>
        <note>catalytic</note>
    </ligand>
</feature>
<feature type="binding site" evidence="1 2">
    <location>
        <position position="136"/>
    </location>
    <ligand>
        <name>Zn(2+)</name>
        <dbReference type="ChEBI" id="CHEBI:29105"/>
        <label>2</label>
    </ligand>
</feature>
<feature type="binding site" evidence="1 2">
    <location>
        <position position="141"/>
    </location>
    <ligand>
        <name>Zn(2+)</name>
        <dbReference type="ChEBI" id="CHEBI:29105"/>
        <label>2</label>
    </ligand>
</feature>
<feature type="binding site" evidence="1 2">
    <location>
        <position position="160"/>
    </location>
    <ligand>
        <name>Zn(2+)</name>
        <dbReference type="ChEBI" id="CHEBI:29105"/>
        <label>2</label>
    </ligand>
</feature>
<feature type="binding site" evidence="1 2">
    <location>
        <position position="163"/>
    </location>
    <ligand>
        <name>Zn(2+)</name>
        <dbReference type="ChEBI" id="CHEBI:29105"/>
        <label>2</label>
    </ligand>
</feature>
<feature type="mutagenesis site" description="Unstable." evidence="3">
    <original>C</original>
    <variation>A</variation>
    <location>
        <position position="163"/>
    </location>
</feature>
<feature type="strand" evidence="5">
    <location>
        <begin position="2"/>
        <end position="10"/>
    </location>
</feature>
<feature type="helix" evidence="5">
    <location>
        <begin position="15"/>
        <end position="30"/>
    </location>
</feature>
<feature type="strand" evidence="5">
    <location>
        <begin position="34"/>
        <end position="39"/>
    </location>
</feature>
<feature type="helix" evidence="5">
    <location>
        <begin position="44"/>
        <end position="46"/>
    </location>
</feature>
<feature type="turn" evidence="5">
    <location>
        <begin position="49"/>
        <end position="52"/>
    </location>
</feature>
<feature type="strand" evidence="5">
    <location>
        <begin position="53"/>
        <end position="55"/>
    </location>
</feature>
<feature type="helix" evidence="5">
    <location>
        <begin position="56"/>
        <end position="64"/>
    </location>
</feature>
<feature type="strand" evidence="5">
    <location>
        <begin position="71"/>
        <end position="79"/>
    </location>
</feature>
<feature type="strand" evidence="5">
    <location>
        <begin position="89"/>
        <end position="93"/>
    </location>
</feature>
<feature type="strand" evidence="5">
    <location>
        <begin position="95"/>
        <end position="103"/>
    </location>
</feature>
<feature type="turn" evidence="5">
    <location>
        <begin position="105"/>
        <end position="107"/>
    </location>
</feature>
<feature type="helix" evidence="5">
    <location>
        <begin position="112"/>
        <end position="130"/>
    </location>
</feature>
<feature type="helix" evidence="5">
    <location>
        <begin position="149"/>
        <end position="154"/>
    </location>
</feature>
<feature type="helix" evidence="5">
    <location>
        <begin position="161"/>
        <end position="171"/>
    </location>
</feature>
<reference key="1">
    <citation type="journal article" date="2002" name="Proc. Natl. Acad. Sci. U.S.A.">
        <title>The complete genome of hyperthermophile Methanopyrus kandleri AV19 and monophyly of archaeal methanogens.</title>
        <authorList>
            <person name="Slesarev A.I."/>
            <person name="Mezhevaya K.V."/>
            <person name="Makarova K.S."/>
            <person name="Polushin N.N."/>
            <person name="Shcherbinina O.V."/>
            <person name="Shakhova V.V."/>
            <person name="Belova G.I."/>
            <person name="Aravind L."/>
            <person name="Natale D.A."/>
            <person name="Rogozin I.B."/>
            <person name="Tatusov R.L."/>
            <person name="Wolf Y.I."/>
            <person name="Stetter K.O."/>
            <person name="Malykh A.G."/>
            <person name="Koonin E.V."/>
            <person name="Kozyavkin S.A."/>
        </authorList>
    </citation>
    <scope>NUCLEOTIDE SEQUENCE [LARGE SCALE GENOMIC DNA]</scope>
    <source>
        <strain>AV19 / DSM 6324 / JCM 9639 / NBRC 100938</strain>
    </source>
</reference>
<reference key="2">
    <citation type="journal article" date="2012" name="PLoS ONE">
        <title>Crystal structures of archaemetzincin reveal a moldable substrate-binding site.</title>
        <authorList>
            <person name="Graef C."/>
            <person name="Schacherl M."/>
            <person name="Waltersperger S."/>
            <person name="Baumann U."/>
        </authorList>
    </citation>
    <scope>MUTAGENESIS OF CYS-163</scope>
    <source>
        <strain>AV19 / DSM 6324 / JCM 9639 / NBRC 100938</strain>
    </source>
</reference>
<reference key="3">
    <citation type="journal article" date="2010" name="Proteins">
        <title>Crystal structure of archaemetzincin AmzA from Methanopyrus kandleri at 1.5 A resolution.</title>
        <authorList>
            <person name="Waltersperger S."/>
            <person name="Widmer C."/>
            <person name="Wang M."/>
            <person name="Baumann U."/>
        </authorList>
    </citation>
    <scope>X-RAY CRYSTALLOGRAPHY (1.50 ANGSTROMS) IN COMPLEX WITH ZINC</scope>
    <scope>FUNCTION</scope>
    <scope>COFACTOR</scope>
    <source>
        <strain>AV19 / DSM 6324 / JCM 9639 / NBRC 100938</strain>
    </source>
</reference>
<proteinExistence type="evidence at protein level"/>
<sequence>MKLCLVAFDGRIPMLSSIVDRFEEHVSEYLGEVKVKKKRAKLPEHAYSKVRGQYLARALLDTLRGMKGEYDRVLGLTSEDLYAPGLNFVFGQARCPGREAVVSVARLLDPDPELYLERVVKELTHELGHTFGLGHCPDRNCVMSFSSSLLEVDRKSPNFCRRCTELLQRNLKRGG</sequence>
<dbReference type="EC" id="3.4.-.-" evidence="1 2"/>
<dbReference type="EMBL" id="AE009439">
    <property type="protein sequence ID" value="AAM01763.1"/>
    <property type="molecule type" value="Genomic_DNA"/>
</dbReference>
<dbReference type="RefSeq" id="WP_011018918.1">
    <property type="nucleotide sequence ID" value="NC_003551.1"/>
</dbReference>
<dbReference type="PDB" id="2X7M">
    <property type="method" value="X-ray"/>
    <property type="resolution" value="1.50 A"/>
    <property type="chains" value="A=1-175"/>
</dbReference>
<dbReference type="PDBsum" id="2X7M"/>
<dbReference type="SMR" id="Q8TXW1"/>
<dbReference type="FunCoup" id="Q8TXW1">
    <property type="interactions" value="1"/>
</dbReference>
<dbReference type="STRING" id="190192.MK0548"/>
<dbReference type="PaxDb" id="190192-MK0548"/>
<dbReference type="EnsemblBacteria" id="AAM01763">
    <property type="protein sequence ID" value="AAM01763"/>
    <property type="gene ID" value="MK0548"/>
</dbReference>
<dbReference type="GeneID" id="1476649"/>
<dbReference type="KEGG" id="mka:MK0548"/>
<dbReference type="HOGENOM" id="CLU_108521_2_0_2"/>
<dbReference type="InParanoid" id="Q8TXW1"/>
<dbReference type="OrthoDB" id="80603at2157"/>
<dbReference type="EvolutionaryTrace" id="Q8TXW1"/>
<dbReference type="Proteomes" id="UP000001826">
    <property type="component" value="Chromosome"/>
</dbReference>
<dbReference type="GO" id="GO:0008237">
    <property type="term" value="F:metallopeptidase activity"/>
    <property type="evidence" value="ECO:0007669"/>
    <property type="project" value="UniProtKB-UniRule"/>
</dbReference>
<dbReference type="GO" id="GO:0008270">
    <property type="term" value="F:zinc ion binding"/>
    <property type="evidence" value="ECO:0000314"/>
    <property type="project" value="UniProtKB"/>
</dbReference>
<dbReference type="GO" id="GO:0006508">
    <property type="term" value="P:proteolysis"/>
    <property type="evidence" value="ECO:0007669"/>
    <property type="project" value="UniProtKB-UniRule"/>
</dbReference>
<dbReference type="CDD" id="cd11375">
    <property type="entry name" value="Peptidase_M54"/>
    <property type="match status" value="1"/>
</dbReference>
<dbReference type="Gene3D" id="3.40.390.10">
    <property type="entry name" value="Collagenase (Catalytic Domain)"/>
    <property type="match status" value="1"/>
</dbReference>
<dbReference type="HAMAP" id="MF_01842">
    <property type="entry name" value="Archaemetzincin"/>
    <property type="match status" value="1"/>
</dbReference>
<dbReference type="InterPro" id="IPR024079">
    <property type="entry name" value="MetalloPept_cat_dom_sf"/>
</dbReference>
<dbReference type="InterPro" id="IPR012962">
    <property type="entry name" value="Pept_M54_archaemetzincn"/>
</dbReference>
<dbReference type="InterPro" id="IPR012091">
    <property type="entry name" value="Pept_M54_archaemetzncn_arc/bac"/>
</dbReference>
<dbReference type="NCBIfam" id="NF033823">
    <property type="entry name" value="archmetzin"/>
    <property type="match status" value="1"/>
</dbReference>
<dbReference type="PANTHER" id="PTHR15910">
    <property type="entry name" value="ARCHAEMETZINCIN"/>
    <property type="match status" value="1"/>
</dbReference>
<dbReference type="PANTHER" id="PTHR15910:SF1">
    <property type="entry name" value="ARCHAEMETZINCIN-2"/>
    <property type="match status" value="1"/>
</dbReference>
<dbReference type="Pfam" id="PF07998">
    <property type="entry name" value="Peptidase_M54"/>
    <property type="match status" value="1"/>
</dbReference>
<dbReference type="PIRSF" id="PIRSF005785">
    <property type="entry name" value="Zn-prot_arch"/>
    <property type="match status" value="1"/>
</dbReference>
<dbReference type="SUPFAM" id="SSF55486">
    <property type="entry name" value="Metalloproteases ('zincins'), catalytic domain"/>
    <property type="match status" value="1"/>
</dbReference>
<protein>
    <recommendedName>
        <fullName evidence="1">Archaemetzincin</fullName>
        <ecNumber evidence="1 2">3.4.-.-</ecNumber>
    </recommendedName>
</protein>
<gene>
    <name evidence="1" type="primary">amzA</name>
    <name type="ordered locus">MK0548</name>
</gene>
<organism>
    <name type="scientific">Methanopyrus kandleri (strain AV19 / DSM 6324 / JCM 9639 / NBRC 100938)</name>
    <dbReference type="NCBI Taxonomy" id="190192"/>
    <lineage>
        <taxon>Archaea</taxon>
        <taxon>Methanobacteriati</taxon>
        <taxon>Methanobacteriota</taxon>
        <taxon>Methanomada group</taxon>
        <taxon>Methanopyri</taxon>
        <taxon>Methanopyrales</taxon>
        <taxon>Methanopyraceae</taxon>
        <taxon>Methanopyrus</taxon>
    </lineage>
</organism>